<protein>
    <recommendedName>
        <fullName>HTH-type transcriptional regulator KipR</fullName>
    </recommendedName>
    <alternativeName>
        <fullName>Kip operon repressor protein</fullName>
    </alternativeName>
</protein>
<keyword id="KW-0238">DNA-binding</keyword>
<keyword id="KW-1185">Reference proteome</keyword>
<keyword id="KW-0678">Repressor</keyword>
<keyword id="KW-0804">Transcription</keyword>
<keyword id="KW-0805">Transcription regulation</keyword>
<dbReference type="EMBL" id="D38161">
    <property type="protein sequence ID" value="BAA07362.1"/>
    <property type="status" value="ALT_SEQ"/>
    <property type="molecule type" value="Genomic_DNA"/>
</dbReference>
<dbReference type="EMBL" id="D50453">
    <property type="protein sequence ID" value="BAA09040.1"/>
    <property type="status" value="ALT_FRAME"/>
    <property type="molecule type" value="Genomic_DNA"/>
</dbReference>
<dbReference type="EMBL" id="AL009126">
    <property type="protein sequence ID" value="CAB12217.2"/>
    <property type="molecule type" value="Genomic_DNA"/>
</dbReference>
<dbReference type="PIR" id="B69766">
    <property type="entry name" value="B69766"/>
</dbReference>
<dbReference type="RefSeq" id="WP_003246517.1">
    <property type="nucleotide sequence ID" value="NZ_OZ025638.1"/>
</dbReference>
<dbReference type="RefSeq" id="WP_009966578.1">
    <property type="nucleotide sequence ID" value="NZ_CM000487.1"/>
</dbReference>
<dbReference type="SMR" id="P42968"/>
<dbReference type="FunCoup" id="P42968">
    <property type="interactions" value="84"/>
</dbReference>
<dbReference type="STRING" id="224308.BSU04100"/>
<dbReference type="PaxDb" id="224308-BSU04100"/>
<dbReference type="EnsemblBacteria" id="CAB12217">
    <property type="protein sequence ID" value="CAB12217"/>
    <property type="gene ID" value="BSU_04100"/>
</dbReference>
<dbReference type="GeneID" id="939999"/>
<dbReference type="KEGG" id="bsu:BSU04100"/>
<dbReference type="PATRIC" id="fig|224308.179.peg.436"/>
<dbReference type="eggNOG" id="COG1414">
    <property type="taxonomic scope" value="Bacteria"/>
</dbReference>
<dbReference type="InParanoid" id="P42968"/>
<dbReference type="OrthoDB" id="9791752at2"/>
<dbReference type="PhylomeDB" id="P42968"/>
<dbReference type="BioCyc" id="BSUB:BSU04100-MONOMER"/>
<dbReference type="Proteomes" id="UP000001570">
    <property type="component" value="Chromosome"/>
</dbReference>
<dbReference type="GO" id="GO:0003677">
    <property type="term" value="F:DNA binding"/>
    <property type="evidence" value="ECO:0000318"/>
    <property type="project" value="GO_Central"/>
</dbReference>
<dbReference type="GO" id="GO:0003700">
    <property type="term" value="F:DNA-binding transcription factor activity"/>
    <property type="evidence" value="ECO:0000318"/>
    <property type="project" value="GO_Central"/>
</dbReference>
<dbReference type="GO" id="GO:0045892">
    <property type="term" value="P:negative regulation of DNA-templated transcription"/>
    <property type="evidence" value="ECO:0000318"/>
    <property type="project" value="GO_Central"/>
</dbReference>
<dbReference type="Gene3D" id="3.30.450.40">
    <property type="match status" value="1"/>
</dbReference>
<dbReference type="Gene3D" id="1.10.10.10">
    <property type="entry name" value="Winged helix-like DNA-binding domain superfamily/Winged helix DNA-binding domain"/>
    <property type="match status" value="1"/>
</dbReference>
<dbReference type="InterPro" id="IPR029016">
    <property type="entry name" value="GAF-like_dom_sf"/>
</dbReference>
<dbReference type="InterPro" id="IPR050707">
    <property type="entry name" value="HTH_MetabolicPath_Reg"/>
</dbReference>
<dbReference type="InterPro" id="IPR014757">
    <property type="entry name" value="Tscrpt_reg_IclR_C"/>
</dbReference>
<dbReference type="InterPro" id="IPR005471">
    <property type="entry name" value="Tscrpt_reg_IclR_N"/>
</dbReference>
<dbReference type="InterPro" id="IPR036388">
    <property type="entry name" value="WH-like_DNA-bd_sf"/>
</dbReference>
<dbReference type="InterPro" id="IPR036390">
    <property type="entry name" value="WH_DNA-bd_sf"/>
</dbReference>
<dbReference type="PANTHER" id="PTHR30136">
    <property type="entry name" value="HELIX-TURN-HELIX TRANSCRIPTIONAL REGULATOR, ICLR FAMILY"/>
    <property type="match status" value="1"/>
</dbReference>
<dbReference type="PANTHER" id="PTHR30136:SF24">
    <property type="entry name" value="HTH-TYPE TRANSCRIPTIONAL REPRESSOR ALLR"/>
    <property type="match status" value="1"/>
</dbReference>
<dbReference type="Pfam" id="PF09339">
    <property type="entry name" value="HTH_IclR"/>
    <property type="match status" value="1"/>
</dbReference>
<dbReference type="Pfam" id="PF01614">
    <property type="entry name" value="IclR_C"/>
    <property type="match status" value="1"/>
</dbReference>
<dbReference type="SMART" id="SM00346">
    <property type="entry name" value="HTH_ICLR"/>
    <property type="match status" value="1"/>
</dbReference>
<dbReference type="SUPFAM" id="SSF55781">
    <property type="entry name" value="GAF domain-like"/>
    <property type="match status" value="1"/>
</dbReference>
<dbReference type="SUPFAM" id="SSF46785">
    <property type="entry name" value="Winged helix' DNA-binding domain"/>
    <property type="match status" value="1"/>
</dbReference>
<dbReference type="PROSITE" id="PS51077">
    <property type="entry name" value="HTH_ICLR"/>
    <property type="match status" value="1"/>
</dbReference>
<dbReference type="PROSITE" id="PS51078">
    <property type="entry name" value="ICLR_ED"/>
    <property type="match status" value="1"/>
</dbReference>
<name>KIPR_BACSU</name>
<comment type="function">
    <text evidence="3">Transcriptional repressor of the kip gene-containing operon.</text>
</comment>
<comment type="induction">
    <text>Induced by glucose when readily available sources of nitrogen, such as ammonia or glutamine, are scarce.</text>
</comment>
<comment type="sequence caution" evidence="4">
    <conflict type="erroneous initiation">
        <sequence resource="EMBL-CDS" id="BAA07362"/>
    </conflict>
    <text>Extended N-terminus.</text>
</comment>
<comment type="sequence caution" evidence="4">
    <conflict type="frameshift">
        <sequence resource="EMBL-CDS" id="BAA07362"/>
    </conflict>
</comment>
<comment type="sequence caution" evidence="4">
    <conflict type="frameshift">
        <sequence resource="EMBL-CDS" id="BAA09040"/>
    </conflict>
</comment>
<organism>
    <name type="scientific">Bacillus subtilis (strain 168)</name>
    <dbReference type="NCBI Taxonomy" id="224308"/>
    <lineage>
        <taxon>Bacteria</taxon>
        <taxon>Bacillati</taxon>
        <taxon>Bacillota</taxon>
        <taxon>Bacilli</taxon>
        <taxon>Bacillales</taxon>
        <taxon>Bacillaceae</taxon>
        <taxon>Bacillus</taxon>
    </lineage>
</organism>
<feature type="chain" id="PRO_0000201762" description="HTH-type transcriptional regulator KipR">
    <location>
        <begin position="1"/>
        <end position="250"/>
    </location>
</feature>
<feature type="domain" description="HTH iclR-type" evidence="1">
    <location>
        <begin position="5"/>
        <end position="65"/>
    </location>
</feature>
<feature type="domain" description="IclR-ED" evidence="2">
    <location>
        <begin position="80"/>
        <end position="249"/>
    </location>
</feature>
<feature type="DNA-binding region" description="H-T-H motif" evidence="1">
    <location>
        <begin position="26"/>
        <end position="45"/>
    </location>
</feature>
<evidence type="ECO:0000255" key="1">
    <source>
        <dbReference type="PROSITE-ProRule" id="PRU00393"/>
    </source>
</evidence>
<evidence type="ECO:0000255" key="2">
    <source>
        <dbReference type="PROSITE-ProRule" id="PRU00394"/>
    </source>
</evidence>
<evidence type="ECO:0000269" key="3">
    <source>
    </source>
</evidence>
<evidence type="ECO:0000305" key="4"/>
<accession>P42968</accession>
<gene>
    <name type="primary">kipR</name>
    <name type="synonym">ycsO</name>
    <name type="ordered locus">BSU04100</name>
</gene>
<reference key="1">
    <citation type="journal article" date="1995" name="Microbiology">
        <title>Determination of a 17,484 bp nucleotide sequence around the 39 degrees region of the Bacillus subtilis chromosome and similarity analysis of the products of putative ORFs.</title>
        <authorList>
            <person name="Akagawa E."/>
            <person name="Kurita K."/>
            <person name="Sugawara T."/>
            <person name="Nakamura K."/>
            <person name="Kasahara Y."/>
            <person name="Ogasawara N."/>
            <person name="Yamane K."/>
        </authorList>
    </citation>
    <scope>NUCLEOTIDE SEQUENCE [GENOMIC DNA]</scope>
    <source>
        <strain>168</strain>
    </source>
</reference>
<reference key="2">
    <citation type="journal article" date="1996" name="Microbiology">
        <title>The 25 degrees-36 degrees region of the Bacillus subtilis chromosome: determination of the sequence of a 146 kb segment and identification of 113 genes.</title>
        <authorList>
            <person name="Yamane K."/>
            <person name="Kumano M."/>
            <person name="Kurita K."/>
        </authorList>
    </citation>
    <scope>NUCLEOTIDE SEQUENCE [GENOMIC DNA]</scope>
    <source>
        <strain>168</strain>
    </source>
</reference>
<reference key="3">
    <citation type="journal article" date="1997" name="Nature">
        <title>The complete genome sequence of the Gram-positive bacterium Bacillus subtilis.</title>
        <authorList>
            <person name="Kunst F."/>
            <person name="Ogasawara N."/>
            <person name="Moszer I."/>
            <person name="Albertini A.M."/>
            <person name="Alloni G."/>
            <person name="Azevedo V."/>
            <person name="Bertero M.G."/>
            <person name="Bessieres P."/>
            <person name="Bolotin A."/>
            <person name="Borchert S."/>
            <person name="Borriss R."/>
            <person name="Boursier L."/>
            <person name="Brans A."/>
            <person name="Braun M."/>
            <person name="Brignell S.C."/>
            <person name="Bron S."/>
            <person name="Brouillet S."/>
            <person name="Bruschi C.V."/>
            <person name="Caldwell B."/>
            <person name="Capuano V."/>
            <person name="Carter N.M."/>
            <person name="Choi S.-K."/>
            <person name="Codani J.-J."/>
            <person name="Connerton I.F."/>
            <person name="Cummings N.J."/>
            <person name="Daniel R.A."/>
            <person name="Denizot F."/>
            <person name="Devine K.M."/>
            <person name="Duesterhoeft A."/>
            <person name="Ehrlich S.D."/>
            <person name="Emmerson P.T."/>
            <person name="Entian K.-D."/>
            <person name="Errington J."/>
            <person name="Fabret C."/>
            <person name="Ferrari E."/>
            <person name="Foulger D."/>
            <person name="Fritz C."/>
            <person name="Fujita M."/>
            <person name="Fujita Y."/>
            <person name="Fuma S."/>
            <person name="Galizzi A."/>
            <person name="Galleron N."/>
            <person name="Ghim S.-Y."/>
            <person name="Glaser P."/>
            <person name="Goffeau A."/>
            <person name="Golightly E.J."/>
            <person name="Grandi G."/>
            <person name="Guiseppi G."/>
            <person name="Guy B.J."/>
            <person name="Haga K."/>
            <person name="Haiech J."/>
            <person name="Harwood C.R."/>
            <person name="Henaut A."/>
            <person name="Hilbert H."/>
            <person name="Holsappel S."/>
            <person name="Hosono S."/>
            <person name="Hullo M.-F."/>
            <person name="Itaya M."/>
            <person name="Jones L.-M."/>
            <person name="Joris B."/>
            <person name="Karamata D."/>
            <person name="Kasahara Y."/>
            <person name="Klaerr-Blanchard M."/>
            <person name="Klein C."/>
            <person name="Kobayashi Y."/>
            <person name="Koetter P."/>
            <person name="Koningstein G."/>
            <person name="Krogh S."/>
            <person name="Kumano M."/>
            <person name="Kurita K."/>
            <person name="Lapidus A."/>
            <person name="Lardinois S."/>
            <person name="Lauber J."/>
            <person name="Lazarevic V."/>
            <person name="Lee S.-M."/>
            <person name="Levine A."/>
            <person name="Liu H."/>
            <person name="Masuda S."/>
            <person name="Mauel C."/>
            <person name="Medigue C."/>
            <person name="Medina N."/>
            <person name="Mellado R.P."/>
            <person name="Mizuno M."/>
            <person name="Moestl D."/>
            <person name="Nakai S."/>
            <person name="Noback M."/>
            <person name="Noone D."/>
            <person name="O'Reilly M."/>
            <person name="Ogawa K."/>
            <person name="Ogiwara A."/>
            <person name="Oudega B."/>
            <person name="Park S.-H."/>
            <person name="Parro V."/>
            <person name="Pohl T.M."/>
            <person name="Portetelle D."/>
            <person name="Porwollik S."/>
            <person name="Prescott A.M."/>
            <person name="Presecan E."/>
            <person name="Pujic P."/>
            <person name="Purnelle B."/>
            <person name="Rapoport G."/>
            <person name="Rey M."/>
            <person name="Reynolds S."/>
            <person name="Rieger M."/>
            <person name="Rivolta C."/>
            <person name="Rocha E."/>
            <person name="Roche B."/>
            <person name="Rose M."/>
            <person name="Sadaie Y."/>
            <person name="Sato T."/>
            <person name="Scanlan E."/>
            <person name="Schleich S."/>
            <person name="Schroeter R."/>
            <person name="Scoffone F."/>
            <person name="Sekiguchi J."/>
            <person name="Sekowska A."/>
            <person name="Seror S.J."/>
            <person name="Serror P."/>
            <person name="Shin B.-S."/>
            <person name="Soldo B."/>
            <person name="Sorokin A."/>
            <person name="Tacconi E."/>
            <person name="Takagi T."/>
            <person name="Takahashi H."/>
            <person name="Takemaru K."/>
            <person name="Takeuchi M."/>
            <person name="Tamakoshi A."/>
            <person name="Tanaka T."/>
            <person name="Terpstra P."/>
            <person name="Tognoni A."/>
            <person name="Tosato V."/>
            <person name="Uchiyama S."/>
            <person name="Vandenbol M."/>
            <person name="Vannier F."/>
            <person name="Vassarotti A."/>
            <person name="Viari A."/>
            <person name="Wambutt R."/>
            <person name="Wedler E."/>
            <person name="Wedler H."/>
            <person name="Weitzenegger T."/>
            <person name="Winters P."/>
            <person name="Wipat A."/>
            <person name="Yamamoto H."/>
            <person name="Yamane K."/>
            <person name="Yasumoto K."/>
            <person name="Yata K."/>
            <person name="Yoshida K."/>
            <person name="Yoshikawa H.-F."/>
            <person name="Zumstein E."/>
            <person name="Yoshikawa H."/>
            <person name="Danchin A."/>
        </authorList>
    </citation>
    <scope>NUCLEOTIDE SEQUENCE [LARGE SCALE GENOMIC DNA]</scope>
    <source>
        <strain>168</strain>
    </source>
</reference>
<reference key="4">
    <citation type="journal article" date="2009" name="Microbiology">
        <title>From a consortium sequence to a unified sequence: the Bacillus subtilis 168 reference genome a decade later.</title>
        <authorList>
            <person name="Barbe V."/>
            <person name="Cruveiller S."/>
            <person name="Kunst F."/>
            <person name="Lenoble P."/>
            <person name="Meurice G."/>
            <person name="Sekowska A."/>
            <person name="Vallenet D."/>
            <person name="Wang T."/>
            <person name="Moszer I."/>
            <person name="Medigue C."/>
            <person name="Danchin A."/>
        </authorList>
    </citation>
    <scope>SEQUENCE REVISION TO C-TERMINUS</scope>
</reference>
<reference key="5">
    <citation type="journal article" date="1997" name="Genes Dev.">
        <title>A novel histidine kinase inhibitor regulating development in Bacillus subtilis.</title>
        <authorList>
            <person name="Wang L."/>
            <person name="Grau R."/>
            <person name="Perego M."/>
            <person name="Hoch J.A."/>
        </authorList>
    </citation>
    <scope>FUNCTION</scope>
    <source>
        <strain>168 / JH642</strain>
    </source>
</reference>
<proteinExistence type="evidence at transcript level"/>
<sequence length="250" mass="27746">MQNKNKTVVKSMALLNLFLHKPSLTLSELVSLTGMPKTSVHRMVSSLEEMGFLSRDASGAYSLGLVFLEFGQLVADRLDIRKIAKPVMEELCREVDEAVQLIMRDGNEAIYVEKIEGTQTVRLYTAIGRRSPLYAGACARSILSFLPREEIEAYIKQTELISIGSGTITDPEKLLQEIDASVQNGYTVSYSELENYTAAIGAPIFNHERQVAAGISIAGFEARFTEDRLPYLTEKVKDAALQISRKIGYT</sequence>